<accession>P82908</accession>
<accession>Q3SYR1</accession>
<evidence type="ECO:0000250" key="1">
    <source>
        <dbReference type="UniProtKB" id="P82909"/>
    </source>
</evidence>
<evidence type="ECO:0000250" key="2">
    <source>
        <dbReference type="UniProtKB" id="Q9CQX8"/>
    </source>
</evidence>
<evidence type="ECO:0000256" key="3">
    <source>
        <dbReference type="SAM" id="MobiDB-lite"/>
    </source>
</evidence>
<evidence type="ECO:0000269" key="4">
    <source>
    </source>
</evidence>
<evidence type="ECO:0000269" key="5">
    <source>
    </source>
</evidence>
<evidence type="ECO:0000269" key="6">
    <source>
    </source>
</evidence>
<evidence type="ECO:0000303" key="7">
    <source>
    </source>
</evidence>
<evidence type="ECO:0000305" key="8"/>
<dbReference type="EMBL" id="BC103454">
    <property type="protein sequence ID" value="AAI03455.1"/>
    <property type="molecule type" value="mRNA"/>
</dbReference>
<dbReference type="RefSeq" id="NP_001030515.1">
    <property type="nucleotide sequence ID" value="NM_001035438.1"/>
</dbReference>
<dbReference type="SMR" id="P82908"/>
<dbReference type="CORUM" id="P82908"/>
<dbReference type="FunCoup" id="P82908">
    <property type="interactions" value="767"/>
</dbReference>
<dbReference type="IntAct" id="P82908">
    <property type="interactions" value="17"/>
</dbReference>
<dbReference type="STRING" id="9913.ENSBTAP00000014665"/>
<dbReference type="PaxDb" id="9913-ENSBTAP00000014665"/>
<dbReference type="PeptideAtlas" id="P82908"/>
<dbReference type="GeneID" id="613835"/>
<dbReference type="KEGG" id="bta:613835"/>
<dbReference type="CTD" id="66128"/>
<dbReference type="VEuPathDB" id="HostDB:ENSBTAG00000011045"/>
<dbReference type="eggNOG" id="ENOG502S7A7">
    <property type="taxonomic scope" value="Eukaryota"/>
</dbReference>
<dbReference type="HOGENOM" id="CLU_135102_0_0_1"/>
<dbReference type="InParanoid" id="P82908"/>
<dbReference type="OMA" id="MSQHSKG"/>
<dbReference type="OrthoDB" id="2116030at2759"/>
<dbReference type="TreeFam" id="TF333436"/>
<dbReference type="Reactome" id="R-BTA-5389840">
    <property type="pathway name" value="Mitochondrial translation elongation"/>
</dbReference>
<dbReference type="Reactome" id="R-BTA-5419276">
    <property type="pathway name" value="Mitochondrial translation termination"/>
</dbReference>
<dbReference type="Reactome" id="R-BTA-6783984">
    <property type="pathway name" value="Glycine degradation"/>
</dbReference>
<dbReference type="Reactome" id="R-BTA-9853506">
    <property type="pathway name" value="OGDH complex synthesizes succinyl-CoA from 2-OG"/>
</dbReference>
<dbReference type="Proteomes" id="UP000009136">
    <property type="component" value="Chromosome 20"/>
</dbReference>
<dbReference type="Bgee" id="ENSBTAG00000011045">
    <property type="expression patterns" value="Expressed in oviduct epithelium and 104 other cell types or tissues"/>
</dbReference>
<dbReference type="GO" id="GO:0005743">
    <property type="term" value="C:mitochondrial inner membrane"/>
    <property type="evidence" value="ECO:0000304"/>
    <property type="project" value="Reactome"/>
</dbReference>
<dbReference type="GO" id="GO:0005739">
    <property type="term" value="C:mitochondrion"/>
    <property type="evidence" value="ECO:0000314"/>
    <property type="project" value="UniProtKB"/>
</dbReference>
<dbReference type="GO" id="GO:0045252">
    <property type="term" value="C:oxoglutarate dehydrogenase complex"/>
    <property type="evidence" value="ECO:0000314"/>
    <property type="project" value="UniProtKB"/>
</dbReference>
<dbReference type="GO" id="GO:0030674">
    <property type="term" value="F:protein-macromolecule adaptor activity"/>
    <property type="evidence" value="ECO:0007669"/>
    <property type="project" value="Ensembl"/>
</dbReference>
<dbReference type="GO" id="GO:0006103">
    <property type="term" value="P:2-oxoglutarate metabolic process"/>
    <property type="evidence" value="ECO:0000314"/>
    <property type="project" value="UniProtKB"/>
</dbReference>
<dbReference type="GO" id="GO:0006099">
    <property type="term" value="P:tricarboxylic acid cycle"/>
    <property type="evidence" value="ECO:0000266"/>
    <property type="project" value="UniProtKB"/>
</dbReference>
<dbReference type="InterPro" id="IPR020373">
    <property type="entry name" value="Kgd4/YMR-31"/>
</dbReference>
<dbReference type="PANTHER" id="PTHR31601">
    <property type="entry name" value="28S RIBOSOMAL PROTEIN S36, MITOCHONDRIAL"/>
    <property type="match status" value="1"/>
</dbReference>
<dbReference type="PANTHER" id="PTHR31601:SF2">
    <property type="entry name" value="ALPHA-KETOGLUTARATE DEHYDROGENASE COMPONENT 4"/>
    <property type="match status" value="1"/>
</dbReference>
<protein>
    <recommendedName>
        <fullName evidence="2">Alpha-ketoglutarate dehydrogenase component 4</fullName>
    </recommendedName>
    <alternativeName>
        <fullName evidence="1">Alpha-ketoglutarate dehydrogenase subunit 4</fullName>
    </alternativeName>
    <alternativeName>
        <fullName evidence="7">Mitochondrial ribosomal protein S36</fullName>
    </alternativeName>
</protein>
<reference evidence="8" key="1">
    <citation type="submission" date="2005-08" db="EMBL/GenBank/DDBJ databases">
        <authorList>
            <consortium name="NIH - Mammalian Gene Collection (MGC) project"/>
        </authorList>
    </citation>
    <scope>NUCLEOTIDE SEQUENCE [LARGE SCALE MRNA]</scope>
    <source>
        <strain>Hereford</strain>
        <tissue>Rumen</tissue>
    </source>
</reference>
<reference key="2">
    <citation type="journal article" date="2001" name="J. Biol. Chem.">
        <title>The small subunit of the mammalian mitochondrial ribosome: identification of the full complement of ribosomal proteins present.</title>
        <authorList>
            <person name="Koc E.C."/>
            <person name="Burkhart W."/>
            <person name="Blackburn K."/>
            <person name="Moseley A."/>
            <person name="Spremulli L.L."/>
        </authorList>
    </citation>
    <scope>PROTEIN SEQUENCE OF 61-78 AND 88-103</scope>
    <scope>SUBCELLULAR LOCATION</scope>
    <source>
        <tissue>Liver</tissue>
    </source>
</reference>
<reference key="3">
    <citation type="journal article" date="2011" name="Biochim. Biophys. Acta">
        <title>Contacts between mammalian mitochondrial translational initiation factor 3 and ribosomal proteins in the small subunit.</title>
        <authorList>
            <person name="Haque M.E."/>
            <person name="Koc H."/>
            <person name="Cimen H."/>
            <person name="Koc E.C."/>
            <person name="Spremulli L.L."/>
        </authorList>
    </citation>
    <scope>PROTEIN SEQUENCE OF 30-57 AND 87-99</scope>
    <scope>SUBCELLULAR LOCATION</scope>
</reference>
<reference key="4">
    <citation type="journal article" date="2023" name="Open Biol.">
        <title>MRPS36 provides a structural link in the eukaryotic 2-oxoglutarate dehydrogenase complex.</title>
        <authorList>
            <person name="Hevler J.F."/>
            <person name="Albanese P."/>
            <person name="Cabrera-Orefice A."/>
            <person name="Potter A."/>
            <person name="Jankevics A."/>
            <person name="Misic J."/>
            <person name="Scheltema R.A."/>
            <person name="Brandt U."/>
            <person name="Arnold S."/>
            <person name="Heck A.J.R."/>
        </authorList>
    </citation>
    <scope>SUBCELLULAR LOCATION</scope>
    <scope>SUBUNIT</scope>
    <scope>FUNCTION</scope>
</reference>
<sequence length="103" mass="11543">MMGSKMASASRVVQVVKPHTPLIRFPDRRDNPKPNVSEVLRSAGLPSHTSSISQHSKGSKSPDWLMHQGPPDTAEMIKTLPQKYRRKLVSQEEIEFIQRGGPE</sequence>
<organism evidence="8">
    <name type="scientific">Bos taurus</name>
    <name type="common">Bovine</name>
    <dbReference type="NCBI Taxonomy" id="9913"/>
    <lineage>
        <taxon>Eukaryota</taxon>
        <taxon>Metazoa</taxon>
        <taxon>Chordata</taxon>
        <taxon>Craniata</taxon>
        <taxon>Vertebrata</taxon>
        <taxon>Euteleostomi</taxon>
        <taxon>Mammalia</taxon>
        <taxon>Eutheria</taxon>
        <taxon>Laurasiatheria</taxon>
        <taxon>Artiodactyla</taxon>
        <taxon>Ruminantia</taxon>
        <taxon>Pecora</taxon>
        <taxon>Bovidae</taxon>
        <taxon>Bovinae</taxon>
        <taxon>Bos</taxon>
    </lineage>
</organism>
<name>KGD4_BOVIN</name>
<gene>
    <name type="primary">KGD4</name>
    <name evidence="7" type="synonym">MRPS36</name>
</gene>
<keyword id="KW-0007">Acetylation</keyword>
<keyword id="KW-0903">Direct protein sequencing</keyword>
<keyword id="KW-0496">Mitochondrion</keyword>
<keyword id="KW-0597">Phosphoprotein</keyword>
<keyword id="KW-1185">Reference proteome</keyword>
<keyword id="KW-0816">Tricarboxylic acid cycle</keyword>
<comment type="function">
    <text evidence="6">Molecular adapter that is necessary to form a stable 2-oxoglutarate dehydrogenase enzyme complex (OGDHC). Enables the specific recruitment of E3 subunit to E2 subunit in the 2-oxoglutarate dehydrogenase complex (OGDHC).</text>
</comment>
<comment type="subunit">
    <text evidence="6">Component of the 2-oxoglutarate dehydrogenase complex (OGDHC), composed of OGDH (2-oxoglutarate dehydrogenase; also called E1 subunit), DLST (dihydrolipoamide succinyltransferase; also called E2 subunit) and DLD (dihydrolipoamide dehydrogenase; also called E3 subunit), and the assembly factor KGD4 (PubMed:36854377). Within OGDHC complex, interacts (via N-terminus) with E3 subunit and (via C-terminus) with E2 subunit (PubMed:36854377).</text>
</comment>
<comment type="subcellular location">
    <subcellularLocation>
        <location evidence="4 5 6">Mitochondrion</location>
    </subcellularLocation>
</comment>
<comment type="similarity">
    <text evidence="8">Belongs to the alpha-ketoglutarate dehydrogenase component 4 family.</text>
</comment>
<comment type="caution">
    <text evidence="1 2 4 5">Was originally identified in the small subunit (28S) of mitochondrial ribosomes that were purified on sucrose gradients (PubMed:11279123, PubMed:22015679). This observation has been challenged by experiments showing KGD4 copurification with the oxoglutarate dehydrogenase complex (OGDHC), also called alpha-ketoglutarate dehydrogenase complex (KGDH). Both mitochondrial ribosome 28S subunit and OGDC have a similar size and OGDC is highly abundant, therefore OGDC has been found to contaminate ribosomal preparations performed by sequential centrifugation steps (By similarity). In addition, KGD4 could not be located in the structure of the human mitochondrial ribosome, supporting the hypothesis that it is not a mitoribosomal protein (By similarity).</text>
</comment>
<feature type="chain" id="PRO_0000087732" description="Alpha-ketoglutarate dehydrogenase component 4">
    <location>
        <begin position="1"/>
        <end position="103"/>
    </location>
</feature>
<feature type="region of interest" description="Disordered" evidence="3">
    <location>
        <begin position="23"/>
        <end position="70"/>
    </location>
</feature>
<feature type="compositionally biased region" description="Low complexity" evidence="3">
    <location>
        <begin position="47"/>
        <end position="61"/>
    </location>
</feature>
<feature type="modified residue" description="N-acetylmethionine" evidence="1">
    <location>
        <position position="1"/>
    </location>
</feature>
<feature type="modified residue" description="N6-succinyllysine" evidence="2">
    <location>
        <position position="5"/>
    </location>
</feature>
<feature type="modified residue" description="Phosphoserine" evidence="1">
    <location>
        <position position="61"/>
    </location>
</feature>
<feature type="modified residue" description="Phosphoserine" evidence="1">
    <location>
        <position position="90"/>
    </location>
</feature>
<proteinExistence type="evidence at protein level"/>